<evidence type="ECO:0000255" key="1">
    <source>
        <dbReference type="HAMAP-Rule" id="MF_00361"/>
    </source>
</evidence>
<name>NADK_ECOSE</name>
<accession>B6I636</accession>
<keyword id="KW-0067">ATP-binding</keyword>
<keyword id="KW-0963">Cytoplasm</keyword>
<keyword id="KW-0418">Kinase</keyword>
<keyword id="KW-0520">NAD</keyword>
<keyword id="KW-0521">NADP</keyword>
<keyword id="KW-0547">Nucleotide-binding</keyword>
<keyword id="KW-0808">Transferase</keyword>
<protein>
    <recommendedName>
        <fullName evidence="1">NAD kinase</fullName>
        <ecNumber evidence="1">2.7.1.23</ecNumber>
    </recommendedName>
    <alternativeName>
        <fullName evidence="1">ATP-dependent NAD kinase</fullName>
    </alternativeName>
</protein>
<dbReference type="EC" id="2.7.1.23" evidence="1"/>
<dbReference type="EMBL" id="AP009240">
    <property type="protein sequence ID" value="BAG78422.1"/>
    <property type="molecule type" value="Genomic_DNA"/>
</dbReference>
<dbReference type="RefSeq" id="WP_001059169.1">
    <property type="nucleotide sequence ID" value="NC_011415.1"/>
</dbReference>
<dbReference type="SMR" id="B6I636"/>
<dbReference type="GeneID" id="93774464"/>
<dbReference type="KEGG" id="ecy:ECSE_2898"/>
<dbReference type="HOGENOM" id="CLU_008831_0_1_6"/>
<dbReference type="Proteomes" id="UP000008199">
    <property type="component" value="Chromosome"/>
</dbReference>
<dbReference type="GO" id="GO:0005737">
    <property type="term" value="C:cytoplasm"/>
    <property type="evidence" value="ECO:0007669"/>
    <property type="project" value="UniProtKB-SubCell"/>
</dbReference>
<dbReference type="GO" id="GO:0005524">
    <property type="term" value="F:ATP binding"/>
    <property type="evidence" value="ECO:0007669"/>
    <property type="project" value="UniProtKB-KW"/>
</dbReference>
<dbReference type="GO" id="GO:0046872">
    <property type="term" value="F:metal ion binding"/>
    <property type="evidence" value="ECO:0007669"/>
    <property type="project" value="UniProtKB-UniRule"/>
</dbReference>
<dbReference type="GO" id="GO:0051287">
    <property type="term" value="F:NAD binding"/>
    <property type="evidence" value="ECO:0007669"/>
    <property type="project" value="UniProtKB-ARBA"/>
</dbReference>
<dbReference type="GO" id="GO:0003951">
    <property type="term" value="F:NAD+ kinase activity"/>
    <property type="evidence" value="ECO:0007669"/>
    <property type="project" value="UniProtKB-UniRule"/>
</dbReference>
<dbReference type="GO" id="GO:0019674">
    <property type="term" value="P:NAD metabolic process"/>
    <property type="evidence" value="ECO:0007669"/>
    <property type="project" value="InterPro"/>
</dbReference>
<dbReference type="GO" id="GO:0006741">
    <property type="term" value="P:NADP biosynthetic process"/>
    <property type="evidence" value="ECO:0007669"/>
    <property type="project" value="UniProtKB-UniRule"/>
</dbReference>
<dbReference type="FunFam" id="2.60.200.30:FF:000001">
    <property type="entry name" value="NAD kinase"/>
    <property type="match status" value="1"/>
</dbReference>
<dbReference type="FunFam" id="3.40.50.10330:FF:000004">
    <property type="entry name" value="NAD kinase"/>
    <property type="match status" value="1"/>
</dbReference>
<dbReference type="Gene3D" id="3.40.50.10330">
    <property type="entry name" value="Probable inorganic polyphosphate/atp-NAD kinase, domain 1"/>
    <property type="match status" value="1"/>
</dbReference>
<dbReference type="Gene3D" id="2.60.200.30">
    <property type="entry name" value="Probable inorganic polyphosphate/atp-NAD kinase, domain 2"/>
    <property type="match status" value="1"/>
</dbReference>
<dbReference type="HAMAP" id="MF_00361">
    <property type="entry name" value="NAD_kinase"/>
    <property type="match status" value="1"/>
</dbReference>
<dbReference type="InterPro" id="IPR017438">
    <property type="entry name" value="ATP-NAD_kinase_N"/>
</dbReference>
<dbReference type="InterPro" id="IPR017437">
    <property type="entry name" value="ATP-NAD_kinase_PpnK-typ_C"/>
</dbReference>
<dbReference type="InterPro" id="IPR016064">
    <property type="entry name" value="NAD/diacylglycerol_kinase_sf"/>
</dbReference>
<dbReference type="InterPro" id="IPR002504">
    <property type="entry name" value="NADK"/>
</dbReference>
<dbReference type="NCBIfam" id="NF002306">
    <property type="entry name" value="PRK01231.1"/>
    <property type="match status" value="1"/>
</dbReference>
<dbReference type="NCBIfam" id="NF002893">
    <property type="entry name" value="PRK03378.1"/>
    <property type="match status" value="1"/>
</dbReference>
<dbReference type="PANTHER" id="PTHR20275">
    <property type="entry name" value="NAD KINASE"/>
    <property type="match status" value="1"/>
</dbReference>
<dbReference type="PANTHER" id="PTHR20275:SF0">
    <property type="entry name" value="NAD KINASE"/>
    <property type="match status" value="1"/>
</dbReference>
<dbReference type="Pfam" id="PF01513">
    <property type="entry name" value="NAD_kinase"/>
    <property type="match status" value="1"/>
</dbReference>
<dbReference type="Pfam" id="PF20143">
    <property type="entry name" value="NAD_kinase_C"/>
    <property type="match status" value="1"/>
</dbReference>
<dbReference type="SUPFAM" id="SSF111331">
    <property type="entry name" value="NAD kinase/diacylglycerol kinase-like"/>
    <property type="match status" value="1"/>
</dbReference>
<comment type="function">
    <text evidence="1">Involved in the regulation of the intracellular balance of NAD and NADP, and is a key enzyme in the biosynthesis of NADP. Catalyzes specifically the phosphorylation on 2'-hydroxyl of the adenosine moiety of NAD to yield NADP.</text>
</comment>
<comment type="catalytic activity">
    <reaction evidence="1">
        <text>NAD(+) + ATP = ADP + NADP(+) + H(+)</text>
        <dbReference type="Rhea" id="RHEA:18629"/>
        <dbReference type="ChEBI" id="CHEBI:15378"/>
        <dbReference type="ChEBI" id="CHEBI:30616"/>
        <dbReference type="ChEBI" id="CHEBI:57540"/>
        <dbReference type="ChEBI" id="CHEBI:58349"/>
        <dbReference type="ChEBI" id="CHEBI:456216"/>
        <dbReference type="EC" id="2.7.1.23"/>
    </reaction>
</comment>
<comment type="cofactor">
    <cofactor evidence="1">
        <name>a divalent metal cation</name>
        <dbReference type="ChEBI" id="CHEBI:60240"/>
    </cofactor>
</comment>
<comment type="subcellular location">
    <subcellularLocation>
        <location evidence="1">Cytoplasm</location>
    </subcellularLocation>
</comment>
<comment type="similarity">
    <text evidence="1">Belongs to the NAD kinase family.</text>
</comment>
<organism>
    <name type="scientific">Escherichia coli (strain SE11)</name>
    <dbReference type="NCBI Taxonomy" id="409438"/>
    <lineage>
        <taxon>Bacteria</taxon>
        <taxon>Pseudomonadati</taxon>
        <taxon>Pseudomonadota</taxon>
        <taxon>Gammaproteobacteria</taxon>
        <taxon>Enterobacterales</taxon>
        <taxon>Enterobacteriaceae</taxon>
        <taxon>Escherichia</taxon>
    </lineage>
</organism>
<gene>
    <name evidence="1" type="primary">nadK</name>
    <name type="ordered locus">ECSE_2898</name>
</gene>
<proteinExistence type="inferred from homology"/>
<reference key="1">
    <citation type="journal article" date="2008" name="DNA Res.">
        <title>Complete genome sequence and comparative analysis of the wild-type commensal Escherichia coli strain SE11 isolated from a healthy adult.</title>
        <authorList>
            <person name="Oshima K."/>
            <person name="Toh H."/>
            <person name="Ogura Y."/>
            <person name="Sasamoto H."/>
            <person name="Morita H."/>
            <person name="Park S.-H."/>
            <person name="Ooka T."/>
            <person name="Iyoda S."/>
            <person name="Taylor T.D."/>
            <person name="Hayashi T."/>
            <person name="Itoh K."/>
            <person name="Hattori M."/>
        </authorList>
    </citation>
    <scope>NUCLEOTIDE SEQUENCE [LARGE SCALE GENOMIC DNA]</scope>
    <source>
        <strain>SE11</strain>
    </source>
</reference>
<sequence length="292" mass="32566">MNNHFKCIGIVGHPRHPTALTTHEMLYRWLCTKGYEVIVEQQIAHELQLKNVKTGTLAEIGQLADLAVVVGGDGNMLGAARTLARYDIKVIGINRGNLGFLTDLDPDNAQQQLADVLEGHYISEKRFLLEAQVCQQDCQKRISTAINEVVLHPGKVAHMIEFEVYIDEIFAFSQRSDGLIISTPTGSTAYSLSAGGPILTPSLDAITLVPMFPHTLSARPLVINSSSTIRLRFSHRRNDLEISCDSQIALPIQEGEDVLIRRCDYHLNLIHPKDYSYFNTLSTKLGWSKKLF</sequence>
<feature type="chain" id="PRO_1000120858" description="NAD kinase">
    <location>
        <begin position="1"/>
        <end position="292"/>
    </location>
</feature>
<feature type="active site" description="Proton acceptor" evidence="1">
    <location>
        <position position="73"/>
    </location>
</feature>
<feature type="binding site" evidence="1">
    <location>
        <begin position="73"/>
        <end position="74"/>
    </location>
    <ligand>
        <name>NAD(+)</name>
        <dbReference type="ChEBI" id="CHEBI:57540"/>
    </ligand>
</feature>
<feature type="binding site" evidence="1">
    <location>
        <begin position="147"/>
        <end position="148"/>
    </location>
    <ligand>
        <name>NAD(+)</name>
        <dbReference type="ChEBI" id="CHEBI:57540"/>
    </ligand>
</feature>
<feature type="binding site" evidence="1">
    <location>
        <position position="158"/>
    </location>
    <ligand>
        <name>NAD(+)</name>
        <dbReference type="ChEBI" id="CHEBI:57540"/>
    </ligand>
</feature>
<feature type="binding site" evidence="1">
    <location>
        <position position="175"/>
    </location>
    <ligand>
        <name>NAD(+)</name>
        <dbReference type="ChEBI" id="CHEBI:57540"/>
    </ligand>
</feature>
<feature type="binding site" evidence="1">
    <location>
        <position position="177"/>
    </location>
    <ligand>
        <name>NAD(+)</name>
        <dbReference type="ChEBI" id="CHEBI:57540"/>
    </ligand>
</feature>
<feature type="binding site" evidence="1">
    <location>
        <begin position="188"/>
        <end position="193"/>
    </location>
    <ligand>
        <name>NAD(+)</name>
        <dbReference type="ChEBI" id="CHEBI:57540"/>
    </ligand>
</feature>
<feature type="binding site" evidence="1">
    <location>
        <position position="247"/>
    </location>
    <ligand>
        <name>NAD(+)</name>
        <dbReference type="ChEBI" id="CHEBI:57540"/>
    </ligand>
</feature>